<gene>
    <name evidence="1" type="primary">clpS</name>
    <name type="ordered locus">PBPRA1151</name>
</gene>
<name>CLPS_PHOPR</name>
<dbReference type="EMBL" id="CR378666">
    <property type="protein sequence ID" value="CAG19562.1"/>
    <property type="molecule type" value="Genomic_DNA"/>
</dbReference>
<dbReference type="RefSeq" id="WP_011217894.1">
    <property type="nucleotide sequence ID" value="NC_006370.1"/>
</dbReference>
<dbReference type="SMR" id="Q6LT14"/>
<dbReference type="STRING" id="298386.PBPRA1151"/>
<dbReference type="KEGG" id="ppr:PBPRA1151"/>
<dbReference type="eggNOG" id="COG2127">
    <property type="taxonomic scope" value="Bacteria"/>
</dbReference>
<dbReference type="HOGENOM" id="CLU_134358_2_1_6"/>
<dbReference type="Proteomes" id="UP000000593">
    <property type="component" value="Chromosome 1"/>
</dbReference>
<dbReference type="GO" id="GO:0030163">
    <property type="term" value="P:protein catabolic process"/>
    <property type="evidence" value="ECO:0007669"/>
    <property type="project" value="InterPro"/>
</dbReference>
<dbReference type="GO" id="GO:0006508">
    <property type="term" value="P:proteolysis"/>
    <property type="evidence" value="ECO:0007669"/>
    <property type="project" value="UniProtKB-UniRule"/>
</dbReference>
<dbReference type="FunFam" id="3.30.1390.10:FF:000002">
    <property type="entry name" value="ATP-dependent Clp protease adapter protein ClpS"/>
    <property type="match status" value="1"/>
</dbReference>
<dbReference type="Gene3D" id="3.30.1390.10">
    <property type="match status" value="1"/>
</dbReference>
<dbReference type="HAMAP" id="MF_00302">
    <property type="entry name" value="ClpS"/>
    <property type="match status" value="1"/>
</dbReference>
<dbReference type="InterPro" id="IPR022935">
    <property type="entry name" value="ClpS"/>
</dbReference>
<dbReference type="InterPro" id="IPR003769">
    <property type="entry name" value="ClpS_core"/>
</dbReference>
<dbReference type="InterPro" id="IPR014719">
    <property type="entry name" value="Ribosomal_bL12_C/ClpS-like"/>
</dbReference>
<dbReference type="NCBIfam" id="NF000670">
    <property type="entry name" value="PRK00033.1-3"/>
    <property type="match status" value="1"/>
</dbReference>
<dbReference type="NCBIfam" id="NF000672">
    <property type="entry name" value="PRK00033.1-5"/>
    <property type="match status" value="1"/>
</dbReference>
<dbReference type="PANTHER" id="PTHR33473:SF19">
    <property type="entry name" value="ATP-DEPENDENT CLP PROTEASE ADAPTER PROTEIN CLPS"/>
    <property type="match status" value="1"/>
</dbReference>
<dbReference type="PANTHER" id="PTHR33473">
    <property type="entry name" value="ATP-DEPENDENT CLP PROTEASE ADAPTER PROTEIN CLPS1, CHLOROPLASTIC"/>
    <property type="match status" value="1"/>
</dbReference>
<dbReference type="Pfam" id="PF02617">
    <property type="entry name" value="ClpS"/>
    <property type="match status" value="1"/>
</dbReference>
<dbReference type="SUPFAM" id="SSF54736">
    <property type="entry name" value="ClpS-like"/>
    <property type="match status" value="1"/>
</dbReference>
<sequence length="106" mass="12247">MSKLYEWIIPESDVLDKEEVQVKPPAMYKVVLNNDDYTPMDFVIEVLQKFFSMDMEKATQLMLNVHYEGKAICGTFTAEVAETKVAQVMMHARENEHPLLCTMEKA</sequence>
<proteinExistence type="inferred from homology"/>
<keyword id="KW-1185">Reference proteome</keyword>
<protein>
    <recommendedName>
        <fullName evidence="1">ATP-dependent Clp protease adapter protein ClpS</fullName>
    </recommendedName>
</protein>
<reference key="1">
    <citation type="journal article" date="2005" name="Science">
        <title>Life at depth: Photobacterium profundum genome sequence and expression analysis.</title>
        <authorList>
            <person name="Vezzi A."/>
            <person name="Campanaro S."/>
            <person name="D'Angelo M."/>
            <person name="Simonato F."/>
            <person name="Vitulo N."/>
            <person name="Lauro F.M."/>
            <person name="Cestaro A."/>
            <person name="Malacrida G."/>
            <person name="Simionati B."/>
            <person name="Cannata N."/>
            <person name="Romualdi C."/>
            <person name="Bartlett D.H."/>
            <person name="Valle G."/>
        </authorList>
    </citation>
    <scope>NUCLEOTIDE SEQUENCE [LARGE SCALE GENOMIC DNA]</scope>
    <source>
        <strain>ATCC BAA-1253 / SS9</strain>
    </source>
</reference>
<evidence type="ECO:0000255" key="1">
    <source>
        <dbReference type="HAMAP-Rule" id="MF_00302"/>
    </source>
</evidence>
<organism>
    <name type="scientific">Photobacterium profundum (strain SS9)</name>
    <dbReference type="NCBI Taxonomy" id="298386"/>
    <lineage>
        <taxon>Bacteria</taxon>
        <taxon>Pseudomonadati</taxon>
        <taxon>Pseudomonadota</taxon>
        <taxon>Gammaproteobacteria</taxon>
        <taxon>Vibrionales</taxon>
        <taxon>Vibrionaceae</taxon>
        <taxon>Photobacterium</taxon>
    </lineage>
</organism>
<comment type="function">
    <text evidence="1">Involved in the modulation of the specificity of the ClpAP-mediated ATP-dependent protein degradation.</text>
</comment>
<comment type="subunit">
    <text evidence="1">Binds to the N-terminal domain of the chaperone ClpA.</text>
</comment>
<comment type="similarity">
    <text evidence="1">Belongs to the ClpS family.</text>
</comment>
<feature type="chain" id="PRO_0000215733" description="ATP-dependent Clp protease adapter protein ClpS">
    <location>
        <begin position="1"/>
        <end position="106"/>
    </location>
</feature>
<accession>Q6LT14</accession>